<comment type="subunit">
    <text evidence="1">Part of the 50S ribosomal subunit. Contacts protein L32.</text>
</comment>
<comment type="similarity">
    <text evidence="1">Belongs to the bacterial ribosomal protein bL17 family.</text>
</comment>
<accession>B5XJ63</accession>
<sequence length="128" mass="14492">MAYRKLGRTSSQRKAMLRDLTTDLLINESIVTTEARAKEIRKTVEKMITLGKRGDLHARRQAAAYVRNEIASENYDEAADKYTSTTALQKLFSEIAPRYAERNGGYTRILKTEPRRGDAAPMAIIELV</sequence>
<evidence type="ECO:0000255" key="1">
    <source>
        <dbReference type="HAMAP-Rule" id="MF_01368"/>
    </source>
</evidence>
<evidence type="ECO:0000305" key="2"/>
<gene>
    <name evidence="1" type="primary">rplQ</name>
    <name type="ordered locus">Spy49_0075</name>
</gene>
<reference key="1">
    <citation type="journal article" date="2008" name="J. Bacteriol.">
        <title>Genome sequence of a nephritogenic and highly transformable M49 strain of Streptococcus pyogenes.</title>
        <authorList>
            <person name="McShan W.M."/>
            <person name="Ferretti J.J."/>
            <person name="Karasawa T."/>
            <person name="Suvorov A.N."/>
            <person name="Lin S."/>
            <person name="Qin B."/>
            <person name="Jia H."/>
            <person name="Kenton S."/>
            <person name="Najar F."/>
            <person name="Wu H."/>
            <person name="Scott J."/>
            <person name="Roe B.A."/>
            <person name="Savic D.J."/>
        </authorList>
    </citation>
    <scope>NUCLEOTIDE SEQUENCE [LARGE SCALE GENOMIC DNA]</scope>
    <source>
        <strain>NZ131</strain>
    </source>
</reference>
<proteinExistence type="inferred from homology"/>
<organism>
    <name type="scientific">Streptococcus pyogenes serotype M49 (strain NZ131)</name>
    <dbReference type="NCBI Taxonomy" id="471876"/>
    <lineage>
        <taxon>Bacteria</taxon>
        <taxon>Bacillati</taxon>
        <taxon>Bacillota</taxon>
        <taxon>Bacilli</taxon>
        <taxon>Lactobacillales</taxon>
        <taxon>Streptococcaceae</taxon>
        <taxon>Streptococcus</taxon>
    </lineage>
</organism>
<feature type="chain" id="PRO_1000144493" description="Large ribosomal subunit protein bL17">
    <location>
        <begin position="1"/>
        <end position="128"/>
    </location>
</feature>
<protein>
    <recommendedName>
        <fullName evidence="1">Large ribosomal subunit protein bL17</fullName>
    </recommendedName>
    <alternativeName>
        <fullName evidence="2">50S ribosomal protein L17</fullName>
    </alternativeName>
</protein>
<dbReference type="EMBL" id="CP000829">
    <property type="protein sequence ID" value="ACI60431.1"/>
    <property type="molecule type" value="Genomic_DNA"/>
</dbReference>
<dbReference type="SMR" id="B5XJ63"/>
<dbReference type="KEGG" id="soz:Spy49_0075"/>
<dbReference type="HOGENOM" id="CLU_074407_2_2_9"/>
<dbReference type="Proteomes" id="UP000001039">
    <property type="component" value="Chromosome"/>
</dbReference>
<dbReference type="GO" id="GO:0022625">
    <property type="term" value="C:cytosolic large ribosomal subunit"/>
    <property type="evidence" value="ECO:0007669"/>
    <property type="project" value="TreeGrafter"/>
</dbReference>
<dbReference type="GO" id="GO:0003735">
    <property type="term" value="F:structural constituent of ribosome"/>
    <property type="evidence" value="ECO:0007669"/>
    <property type="project" value="InterPro"/>
</dbReference>
<dbReference type="GO" id="GO:0006412">
    <property type="term" value="P:translation"/>
    <property type="evidence" value="ECO:0007669"/>
    <property type="project" value="UniProtKB-UniRule"/>
</dbReference>
<dbReference type="FunFam" id="3.90.1030.10:FF:000002">
    <property type="entry name" value="50S ribosomal protein L17"/>
    <property type="match status" value="1"/>
</dbReference>
<dbReference type="Gene3D" id="3.90.1030.10">
    <property type="entry name" value="Ribosomal protein L17"/>
    <property type="match status" value="1"/>
</dbReference>
<dbReference type="HAMAP" id="MF_01368">
    <property type="entry name" value="Ribosomal_bL17"/>
    <property type="match status" value="1"/>
</dbReference>
<dbReference type="InterPro" id="IPR000456">
    <property type="entry name" value="Ribosomal_bL17"/>
</dbReference>
<dbReference type="InterPro" id="IPR047859">
    <property type="entry name" value="Ribosomal_bL17_CS"/>
</dbReference>
<dbReference type="InterPro" id="IPR036373">
    <property type="entry name" value="Ribosomal_bL17_sf"/>
</dbReference>
<dbReference type="NCBIfam" id="TIGR00059">
    <property type="entry name" value="L17"/>
    <property type="match status" value="1"/>
</dbReference>
<dbReference type="PANTHER" id="PTHR14413:SF16">
    <property type="entry name" value="LARGE RIBOSOMAL SUBUNIT PROTEIN BL17M"/>
    <property type="match status" value="1"/>
</dbReference>
<dbReference type="PANTHER" id="PTHR14413">
    <property type="entry name" value="RIBOSOMAL PROTEIN L17"/>
    <property type="match status" value="1"/>
</dbReference>
<dbReference type="Pfam" id="PF01196">
    <property type="entry name" value="Ribosomal_L17"/>
    <property type="match status" value="1"/>
</dbReference>
<dbReference type="SUPFAM" id="SSF64263">
    <property type="entry name" value="Prokaryotic ribosomal protein L17"/>
    <property type="match status" value="1"/>
</dbReference>
<dbReference type="PROSITE" id="PS01167">
    <property type="entry name" value="RIBOSOMAL_L17"/>
    <property type="match status" value="1"/>
</dbReference>
<name>RL17_STRPZ</name>
<keyword id="KW-0687">Ribonucleoprotein</keyword>
<keyword id="KW-0689">Ribosomal protein</keyword>